<protein>
    <recommendedName>
        <fullName>Sorting nexin MVP1</fullName>
    </recommendedName>
</protein>
<accession>Q6CHY6</accession>
<proteinExistence type="inferred from homology"/>
<feature type="chain" id="PRO_0000238603" description="Sorting nexin MVP1">
    <location>
        <begin position="1"/>
        <end position="605"/>
    </location>
</feature>
<feature type="domain" description="PX" evidence="2">
    <location>
        <begin position="226"/>
        <end position="343"/>
    </location>
</feature>
<feature type="region of interest" description="Disordered" evidence="3">
    <location>
        <begin position="113"/>
        <end position="147"/>
    </location>
</feature>
<feature type="region of interest" description="Disordered" evidence="3">
    <location>
        <begin position="175"/>
        <end position="213"/>
    </location>
</feature>
<feature type="compositionally biased region" description="Polar residues" evidence="3">
    <location>
        <begin position="123"/>
        <end position="138"/>
    </location>
</feature>
<feature type="compositionally biased region" description="Low complexity" evidence="3">
    <location>
        <begin position="180"/>
        <end position="193"/>
    </location>
</feature>
<feature type="binding site" evidence="1">
    <location>
        <position position="264"/>
    </location>
    <ligand>
        <name>a 1,2-diacyl-sn-glycero-3-phospho-(1D-myo-inositol-3-phosphate)</name>
        <dbReference type="ChEBI" id="CHEBI:58088"/>
    </ligand>
</feature>
<feature type="binding site" evidence="1">
    <location>
        <position position="266"/>
    </location>
    <ligand>
        <name>a 1,2-diacyl-sn-glycero-3-phospho-(1D-myo-inositol-3-phosphate)</name>
        <dbReference type="ChEBI" id="CHEBI:58088"/>
    </ligand>
</feature>
<feature type="binding site" evidence="1">
    <location>
        <position position="290"/>
    </location>
    <ligand>
        <name>a 1,2-diacyl-sn-glycero-3-phospho-(1D-myo-inositol-3-phosphate)</name>
        <dbReference type="ChEBI" id="CHEBI:58088"/>
    </ligand>
</feature>
<feature type="binding site" evidence="1">
    <location>
        <position position="309"/>
    </location>
    <ligand>
        <name>a 1,2-diacyl-sn-glycero-3-phospho-(1D-myo-inositol-3-phosphate)</name>
        <dbReference type="ChEBI" id="CHEBI:58088"/>
    </ligand>
</feature>
<organism>
    <name type="scientific">Yarrowia lipolytica (strain CLIB 122 / E 150)</name>
    <name type="common">Yeast</name>
    <name type="synonym">Candida lipolytica</name>
    <dbReference type="NCBI Taxonomy" id="284591"/>
    <lineage>
        <taxon>Eukaryota</taxon>
        <taxon>Fungi</taxon>
        <taxon>Dikarya</taxon>
        <taxon>Ascomycota</taxon>
        <taxon>Saccharomycotina</taxon>
        <taxon>Dipodascomycetes</taxon>
        <taxon>Dipodascales</taxon>
        <taxon>Dipodascales incertae sedis</taxon>
        <taxon>Yarrowia</taxon>
    </lineage>
</organism>
<dbReference type="EMBL" id="CR382127">
    <property type="protein sequence ID" value="CAG83648.1"/>
    <property type="molecule type" value="Genomic_DNA"/>
</dbReference>
<dbReference type="RefSeq" id="XP_499725.1">
    <property type="nucleotide sequence ID" value="XM_499725.1"/>
</dbReference>
<dbReference type="SMR" id="Q6CHY6"/>
<dbReference type="FunCoup" id="Q6CHY6">
    <property type="interactions" value="160"/>
</dbReference>
<dbReference type="STRING" id="284591.Q6CHY6"/>
<dbReference type="EnsemblFungi" id="CAG83648">
    <property type="protein sequence ID" value="CAG83648"/>
    <property type="gene ID" value="YALI0_A03443g"/>
</dbReference>
<dbReference type="KEGG" id="yli:2906047"/>
<dbReference type="VEuPathDB" id="FungiDB:YALI0_A03443g"/>
<dbReference type="HOGENOM" id="CLU_009058_2_0_1"/>
<dbReference type="InParanoid" id="Q6CHY6"/>
<dbReference type="OMA" id="QNYVHEQ"/>
<dbReference type="OrthoDB" id="112353at4891"/>
<dbReference type="Proteomes" id="UP000001300">
    <property type="component" value="Chromosome A"/>
</dbReference>
<dbReference type="GO" id="GO:0005829">
    <property type="term" value="C:cytosol"/>
    <property type="evidence" value="ECO:0007669"/>
    <property type="project" value="GOC"/>
</dbReference>
<dbReference type="GO" id="GO:0005768">
    <property type="term" value="C:endosome"/>
    <property type="evidence" value="ECO:0000318"/>
    <property type="project" value="GO_Central"/>
</dbReference>
<dbReference type="GO" id="GO:0016020">
    <property type="term" value="C:membrane"/>
    <property type="evidence" value="ECO:0007669"/>
    <property type="project" value="UniProtKB-SubCell"/>
</dbReference>
<dbReference type="GO" id="GO:0032266">
    <property type="term" value="F:phosphatidylinositol-3-phosphate binding"/>
    <property type="evidence" value="ECO:0000318"/>
    <property type="project" value="GO_Central"/>
</dbReference>
<dbReference type="GO" id="GO:0006623">
    <property type="term" value="P:protein targeting to vacuole"/>
    <property type="evidence" value="ECO:0000318"/>
    <property type="project" value="GO_Central"/>
</dbReference>
<dbReference type="GO" id="GO:0042147">
    <property type="term" value="P:retrograde transport, endosome to Golgi"/>
    <property type="evidence" value="ECO:0000318"/>
    <property type="project" value="GO_Central"/>
</dbReference>
<dbReference type="CDD" id="cd07597">
    <property type="entry name" value="BAR_SNX8"/>
    <property type="match status" value="1"/>
</dbReference>
<dbReference type="CDD" id="cd06866">
    <property type="entry name" value="PX_SNX8_Mvp1p_like"/>
    <property type="match status" value="1"/>
</dbReference>
<dbReference type="FunFam" id="3.30.1520.10:FF:000042">
    <property type="entry name" value="Sorting nexin mvp1"/>
    <property type="match status" value="1"/>
</dbReference>
<dbReference type="Gene3D" id="3.30.1520.10">
    <property type="entry name" value="Phox-like domain"/>
    <property type="match status" value="1"/>
</dbReference>
<dbReference type="InterPro" id="IPR001683">
    <property type="entry name" value="PX_dom"/>
</dbReference>
<dbReference type="InterPro" id="IPR036871">
    <property type="entry name" value="PX_dom_sf"/>
</dbReference>
<dbReference type="InterPro" id="IPR028662">
    <property type="entry name" value="SNX8/Mvp1"/>
</dbReference>
<dbReference type="InterPro" id="IPR035704">
    <property type="entry name" value="SNX8/Mvp1_PX"/>
</dbReference>
<dbReference type="InterPro" id="IPR045734">
    <property type="entry name" value="Snx8_BAR_dom"/>
</dbReference>
<dbReference type="PANTHER" id="PTHR47554">
    <property type="entry name" value="SORTING NEXIN MVP1"/>
    <property type="match status" value="1"/>
</dbReference>
<dbReference type="PANTHER" id="PTHR47554:SF1">
    <property type="entry name" value="SORTING NEXIN MVP1"/>
    <property type="match status" value="1"/>
</dbReference>
<dbReference type="Pfam" id="PF00787">
    <property type="entry name" value="PX"/>
    <property type="match status" value="1"/>
</dbReference>
<dbReference type="Pfam" id="PF19566">
    <property type="entry name" value="Snx8_BAR_dom"/>
    <property type="match status" value="1"/>
</dbReference>
<dbReference type="SMART" id="SM00312">
    <property type="entry name" value="PX"/>
    <property type="match status" value="1"/>
</dbReference>
<dbReference type="SUPFAM" id="SSF64268">
    <property type="entry name" value="PX domain"/>
    <property type="match status" value="1"/>
</dbReference>
<dbReference type="PROSITE" id="PS50195">
    <property type="entry name" value="PX"/>
    <property type="match status" value="1"/>
</dbReference>
<name>MVP1_YARLI</name>
<sequence length="605" mass="68061">MSLFSAATTAVERTGYGSRYDHIFDMFHPIDGRIPAVCYKRLLETINVSGEDKDRLATLAGSILEGGDGSGGILTSSFTRESWRAALLLANVAQDGLPFDDPSQLVNVDTLTPMDFSEEGERSSINFSASTTGRSQTPLFGDDLDDHSIQSSRSESIIHNNGHSRGHSALDWNPEEQEALQQSQLSQSQLSRSTTPPPLNPQALVPESESGVWTAPPRPDFAPNKADSVTLAIVPEREGMFLFRHVNYSISSVSGTDRITVIRRYSDFSWLQDYLLKKYCFRQVPLLPPKRLAVNGHYLSSDNYFLERRRRGLTRFINQVLRHPVLGQDEAVRTFVTLRNDISGWKKSVFNTAREEFNGRTIDPKFVQQWDEQQATALWAGLIVELDRSHDSVVQLCVLLDRVAKRQEAQAVDSAKIAYNLGAALPPSARVLYSVADDGCVQQITRGLSRASARIETDCQLQQDEARGSQVGVLEEAKKYREALGSMRELFDRLEKYGGNNIPLLEKRIQQNQGRVTLARQRKALMSEIEKLDRAIKMDTEMIAAHKNRTWLIRECITEEIGLFQKTQLQISKLLQEFCVDKIKYAELYSDNWGGLDNDVMDLPV</sequence>
<keyword id="KW-0963">Cytoplasm</keyword>
<keyword id="KW-0472">Membrane</keyword>
<keyword id="KW-0653">Protein transport</keyword>
<keyword id="KW-1185">Reference proteome</keyword>
<keyword id="KW-0813">Transport</keyword>
<comment type="function">
    <text evidence="1">Required for vacuolar protein sorting.</text>
</comment>
<comment type="subcellular location">
    <subcellularLocation>
        <location evidence="1">Cytoplasm</location>
    </subcellularLocation>
    <subcellularLocation>
        <location evidence="1">Membrane</location>
        <topology evidence="1">Peripheral membrane protein</topology>
        <orientation evidence="1">Cytoplasmic side</orientation>
    </subcellularLocation>
</comment>
<comment type="domain">
    <text evidence="1">The PX domain binds phosphatidylinositol 3-phosphate which is necessary for peripheral membrane localization.</text>
</comment>
<comment type="similarity">
    <text evidence="4">Belongs to the sorting nexin family.</text>
</comment>
<reference key="1">
    <citation type="journal article" date="2004" name="Nature">
        <title>Genome evolution in yeasts.</title>
        <authorList>
            <person name="Dujon B."/>
            <person name="Sherman D."/>
            <person name="Fischer G."/>
            <person name="Durrens P."/>
            <person name="Casaregola S."/>
            <person name="Lafontaine I."/>
            <person name="de Montigny J."/>
            <person name="Marck C."/>
            <person name="Neuveglise C."/>
            <person name="Talla E."/>
            <person name="Goffard N."/>
            <person name="Frangeul L."/>
            <person name="Aigle M."/>
            <person name="Anthouard V."/>
            <person name="Babour A."/>
            <person name="Barbe V."/>
            <person name="Barnay S."/>
            <person name="Blanchin S."/>
            <person name="Beckerich J.-M."/>
            <person name="Beyne E."/>
            <person name="Bleykasten C."/>
            <person name="Boisrame A."/>
            <person name="Boyer J."/>
            <person name="Cattolico L."/>
            <person name="Confanioleri F."/>
            <person name="de Daruvar A."/>
            <person name="Despons L."/>
            <person name="Fabre E."/>
            <person name="Fairhead C."/>
            <person name="Ferry-Dumazet H."/>
            <person name="Groppi A."/>
            <person name="Hantraye F."/>
            <person name="Hennequin C."/>
            <person name="Jauniaux N."/>
            <person name="Joyet P."/>
            <person name="Kachouri R."/>
            <person name="Kerrest A."/>
            <person name="Koszul R."/>
            <person name="Lemaire M."/>
            <person name="Lesur I."/>
            <person name="Ma L."/>
            <person name="Muller H."/>
            <person name="Nicaud J.-M."/>
            <person name="Nikolski M."/>
            <person name="Oztas S."/>
            <person name="Ozier-Kalogeropoulos O."/>
            <person name="Pellenz S."/>
            <person name="Potier S."/>
            <person name="Richard G.-F."/>
            <person name="Straub M.-L."/>
            <person name="Suleau A."/>
            <person name="Swennen D."/>
            <person name="Tekaia F."/>
            <person name="Wesolowski-Louvel M."/>
            <person name="Westhof E."/>
            <person name="Wirth B."/>
            <person name="Zeniou-Meyer M."/>
            <person name="Zivanovic Y."/>
            <person name="Bolotin-Fukuhara M."/>
            <person name="Thierry A."/>
            <person name="Bouchier C."/>
            <person name="Caudron B."/>
            <person name="Scarpelli C."/>
            <person name="Gaillardin C."/>
            <person name="Weissenbach J."/>
            <person name="Wincker P."/>
            <person name="Souciet J.-L."/>
        </authorList>
    </citation>
    <scope>NUCLEOTIDE SEQUENCE [LARGE SCALE GENOMIC DNA]</scope>
    <source>
        <strain>CLIB 122 / E 150</strain>
    </source>
</reference>
<evidence type="ECO:0000250" key="1"/>
<evidence type="ECO:0000255" key="2">
    <source>
        <dbReference type="PROSITE-ProRule" id="PRU00147"/>
    </source>
</evidence>
<evidence type="ECO:0000256" key="3">
    <source>
        <dbReference type="SAM" id="MobiDB-lite"/>
    </source>
</evidence>
<evidence type="ECO:0000305" key="4"/>
<gene>
    <name type="primary">MVP1</name>
    <name type="ordered locus">YALI0A03443g</name>
</gene>